<protein>
    <recommendedName>
        <fullName evidence="5">Conotoxin mr3d</fullName>
    </recommendedName>
    <alternativeName>
        <fullName evidence="4 5">Conotoxin Mr3.2</fullName>
    </alternativeName>
    <alternativeName>
        <fullName evidence="6">Conotoxin mr3d.1</fullName>
    </alternativeName>
</protein>
<accession>P0C1N1</accession>
<evidence type="ECO:0000255" key="1"/>
<evidence type="ECO:0000269" key="2">
    <source>
    </source>
</evidence>
<evidence type="ECO:0000269" key="3">
    <source>
    </source>
</evidence>
<evidence type="ECO:0000303" key="4">
    <source>
    </source>
</evidence>
<evidence type="ECO:0000303" key="5">
    <source>
    </source>
</evidence>
<evidence type="ECO:0000303" key="6">
    <source>
    </source>
</evidence>
<evidence type="ECO:0000305" key="7"/>
<evidence type="ECO:0000305" key="8">
    <source>
    </source>
</evidence>
<evidence type="ECO:0000305" key="9">
    <source>
    </source>
</evidence>
<proteinExistence type="evidence at protein level"/>
<sequence>MSKLGILLTICLLLFPLTAVPLDGDQPADRPAERMQDDISSEHHPFFDPVKRCCRLSCGLGCHPCCG</sequence>
<reference key="1">
    <citation type="journal article" date="2005" name="Biochemistry">
        <title>Definition of the M-conotoxin superfamily: characterization of novel peptides from molluscivorous Conus venoms.</title>
        <authorList>
            <person name="Corpuz G.P."/>
            <person name="Jacobsen R.B."/>
            <person name="Jimenez E.C."/>
            <person name="Watkins M."/>
            <person name="Walker C."/>
            <person name="Colledge C."/>
            <person name="Garrett J.E."/>
            <person name="McDougal O."/>
            <person name="Li W."/>
            <person name="Gray W.R."/>
            <person name="Hillyard D.R."/>
            <person name="Rivier J."/>
            <person name="McIntosh J.M."/>
            <person name="Cruz L.J."/>
            <person name="Olivera B.M."/>
        </authorList>
    </citation>
    <scope>NUCLEOTIDE SEQUENCE [MRNA]</scope>
    <source>
        <tissue>Venom duct</tissue>
    </source>
</reference>
<reference key="2">
    <citation type="journal article" date="2006" name="FEBS J.">
        <title>Characterization of novel M-superfamily conotoxins with new disulfide linkage.</title>
        <authorList>
            <person name="Han Y.-H."/>
            <person name="Wang Q."/>
            <person name="Jiang H."/>
            <person name="Liu L."/>
            <person name="Xiao C."/>
            <person name="Yuan D.-D."/>
            <person name="Shao X.-X."/>
            <person name="Dai Q.-Y."/>
            <person name="Cheng J.-S."/>
            <person name="Chi C.-W."/>
        </authorList>
    </citation>
    <scope>PROTEIN SEQUENCE OF 53-66</scope>
    <scope>HYDROXYLATION AT PRO-64</scope>
    <scope>AMIDATION AT CYS-66</scope>
    <scope>SUBCELLULAR LOCATION</scope>
    <scope>MASS SPECTROMETRY</scope>
    <scope>BIOASSAY</scope>
    <source>
        <tissue>Venom</tissue>
    </source>
</reference>
<reference key="3">
    <citation type="journal article" date="2022" name="Molecules">
        <title>Anti-ovarian cancer conotoxins identified from Conus venom.</title>
        <authorList>
            <person name="Ju S."/>
            <person name="Zhang Y."/>
            <person name="Guo X."/>
            <person name="Yan Q."/>
            <person name="Liu S."/>
            <person name="Ma B."/>
            <person name="Zhang M."/>
            <person name="Bao J."/>
            <person name="Luo S."/>
            <person name="Fu Y."/>
        </authorList>
    </citation>
    <scope>PROTEIN SEQUENCE OF 53-66</scope>
    <scope>IDENTIFICATION BY MASS SPECTROMETRY</scope>
    <scope>SUBCELLULAR LOCATION</scope>
    <scope>ABSENCE OF HYDROXYLATION</scope>
    <scope>ABSENCE OF AMIDATION</scope>
    <scope>SYNTHESIS OF 53-66</scope>
    <scope>DISULFIDE BONDS</scope>
    <source>
        <tissue>Venom</tissue>
    </source>
</reference>
<feature type="signal peptide" evidence="1">
    <location>
        <begin position="1"/>
        <end position="19"/>
    </location>
</feature>
<feature type="propeptide" id="PRO_0000246039" evidence="2">
    <location>
        <begin position="20"/>
        <end position="52"/>
    </location>
</feature>
<feature type="peptide" id="PRO_0000246040" description="Conotoxin mr3d">
    <location>
        <begin position="53"/>
        <end position="66"/>
    </location>
</feature>
<feature type="modified residue" description="4-hydroxyproline; partial" evidence="2 3">
    <location>
        <position position="64"/>
    </location>
</feature>
<feature type="modified residue" description="Cysteine amide; partial" evidence="2 3">
    <location>
        <position position="66"/>
    </location>
</feature>
<feature type="disulfide bond" evidence="3">
    <location>
        <begin position="53"/>
        <end position="65"/>
    </location>
</feature>
<feature type="disulfide bond" evidence="3">
    <location>
        <begin position="54"/>
        <end position="62"/>
    </location>
</feature>
<feature type="disulfide bond" evidence="3">
    <location>
        <begin position="58"/>
        <end position="66"/>
    </location>
</feature>
<name>CM3D_CONMR</name>
<organism>
    <name type="scientific">Conus marmoreus</name>
    <name type="common">Marble cone</name>
    <dbReference type="NCBI Taxonomy" id="42752"/>
    <lineage>
        <taxon>Eukaryota</taxon>
        <taxon>Metazoa</taxon>
        <taxon>Spiralia</taxon>
        <taxon>Lophotrochozoa</taxon>
        <taxon>Mollusca</taxon>
        <taxon>Gastropoda</taxon>
        <taxon>Caenogastropoda</taxon>
        <taxon>Neogastropoda</taxon>
        <taxon>Conoidea</taxon>
        <taxon>Conidae</taxon>
        <taxon>Conus</taxon>
    </lineage>
</organism>
<keyword id="KW-0027">Amidation</keyword>
<keyword id="KW-0165">Cleavage on pair of basic residues</keyword>
<keyword id="KW-0903">Direct protein sequencing</keyword>
<keyword id="KW-1015">Disulfide bond</keyword>
<keyword id="KW-0379">Hydroxylation</keyword>
<keyword id="KW-0528">Neurotoxin</keyword>
<keyword id="KW-0964">Secreted</keyword>
<keyword id="KW-0732">Signal</keyword>
<keyword id="KW-0800">Toxin</keyword>
<dbReference type="ConoServer" id="1471">
    <property type="toxin name" value="MrIIID precursor"/>
</dbReference>
<dbReference type="GO" id="GO:0005576">
    <property type="term" value="C:extracellular region"/>
    <property type="evidence" value="ECO:0007669"/>
    <property type="project" value="UniProtKB-SubCell"/>
</dbReference>
<dbReference type="GO" id="GO:0008200">
    <property type="term" value="F:ion channel inhibitor activity"/>
    <property type="evidence" value="ECO:0007669"/>
    <property type="project" value="InterPro"/>
</dbReference>
<dbReference type="GO" id="GO:0090729">
    <property type="term" value="F:toxin activity"/>
    <property type="evidence" value="ECO:0007669"/>
    <property type="project" value="UniProtKB-KW"/>
</dbReference>
<dbReference type="InterPro" id="IPR004214">
    <property type="entry name" value="Conotoxin"/>
</dbReference>
<dbReference type="Pfam" id="PF02950">
    <property type="entry name" value="Conotoxin"/>
    <property type="match status" value="1"/>
</dbReference>
<comment type="subcellular location">
    <subcellularLocation>
        <location evidence="2 3">Secreted</location>
    </subcellularLocation>
</comment>
<comment type="tissue specificity">
    <text evidence="8 9">Expressed by the venom duct.</text>
</comment>
<comment type="domain">
    <text evidence="7">The cysteine framework is III (CC-C-C-CC). Classified in the M-2 branch, since 2 residues stand between the fourth and the fifth cysteine residues.</text>
</comment>
<comment type="PTM">
    <text evidence="2 3">Has been found to be hydroxylated and amidated by Han et al. (2006), and to be unmodified by Ju et al. (2022).</text>
</comment>
<comment type="mass spectrometry"/>
<comment type="miscellaneous">
    <text evidence="2">Negative results: does not show inhibition on Nav1.4 and Nav1.8 sodium channels. Intracranial injection into mice does not elicit symptoms.</text>
</comment>
<comment type="similarity">
    <text evidence="7">Belongs to the conotoxin M superfamily.</text>
</comment>